<protein>
    <recommendedName>
        <fullName evidence="1">tRNA 2-selenouridine synthase</fullName>
        <ecNumber evidence="1">2.9.1.3</ecNumber>
    </recommendedName>
</protein>
<evidence type="ECO:0000255" key="1">
    <source>
        <dbReference type="HAMAP-Rule" id="MF_01622"/>
    </source>
</evidence>
<organism>
    <name type="scientific">Escherichia coli (strain K12 / DH10B)</name>
    <dbReference type="NCBI Taxonomy" id="316385"/>
    <lineage>
        <taxon>Bacteria</taxon>
        <taxon>Pseudomonadati</taxon>
        <taxon>Pseudomonadota</taxon>
        <taxon>Gammaproteobacteria</taxon>
        <taxon>Enterobacterales</taxon>
        <taxon>Enterobacteriaceae</taxon>
        <taxon>Escherichia</taxon>
    </lineage>
</organism>
<keyword id="KW-0711">Selenium</keyword>
<keyword id="KW-0808">Transferase</keyword>
<gene>
    <name evidence="1" type="primary">selU</name>
    <name type="ordered locus">ECDH10B_0459</name>
</gene>
<comment type="function">
    <text evidence="1">Involved in the post-transcriptional modification of the uridine at the wobble position (U34) of tRNA(Lys), tRNA(Glu) and tRNA(Gln). Catalyzes the conversion of 2-thiouridine (S2U-RNA) to 2-selenouridine (Se2U-RNA). Acts in a two-step process involving geranylation of 2-thiouridine (S2U) to S-geranyl-2-thiouridine (geS2U) and subsequent selenation of the latter derivative to 2-selenouridine (Se2U) in the tRNA chain.</text>
</comment>
<comment type="catalytic activity">
    <reaction evidence="1">
        <text>5-methylaminomethyl-2-thiouridine(34) in tRNA + selenophosphate + (2E)-geranyl diphosphate + H2O + H(+) = 5-methylaminomethyl-2-selenouridine(34) in tRNA + (2E)-thiogeraniol + phosphate + diphosphate</text>
        <dbReference type="Rhea" id="RHEA:42716"/>
        <dbReference type="Rhea" id="RHEA-COMP:10195"/>
        <dbReference type="Rhea" id="RHEA-COMP:10196"/>
        <dbReference type="ChEBI" id="CHEBI:15377"/>
        <dbReference type="ChEBI" id="CHEBI:15378"/>
        <dbReference type="ChEBI" id="CHEBI:16144"/>
        <dbReference type="ChEBI" id="CHEBI:33019"/>
        <dbReference type="ChEBI" id="CHEBI:43474"/>
        <dbReference type="ChEBI" id="CHEBI:58057"/>
        <dbReference type="ChEBI" id="CHEBI:74455"/>
        <dbReference type="ChEBI" id="CHEBI:82743"/>
        <dbReference type="ChEBI" id="CHEBI:143703"/>
        <dbReference type="EC" id="2.9.1.3"/>
    </reaction>
    <physiologicalReaction direction="left-to-right" evidence="1">
        <dbReference type="Rhea" id="RHEA:42717"/>
    </physiologicalReaction>
</comment>
<comment type="catalytic activity">
    <reaction evidence="1">
        <text>5-methylaminomethyl-2-thiouridine(34) in tRNA + (2E)-geranyl diphosphate = 5-methylaminomethyl-S-(2E)-geranyl-thiouridine(34) in tRNA + diphosphate</text>
        <dbReference type="Rhea" id="RHEA:14085"/>
        <dbReference type="Rhea" id="RHEA-COMP:10195"/>
        <dbReference type="Rhea" id="RHEA-COMP:14654"/>
        <dbReference type="ChEBI" id="CHEBI:33019"/>
        <dbReference type="ChEBI" id="CHEBI:58057"/>
        <dbReference type="ChEBI" id="CHEBI:74455"/>
        <dbReference type="ChEBI" id="CHEBI:140632"/>
    </reaction>
    <physiologicalReaction direction="left-to-right" evidence="1">
        <dbReference type="Rhea" id="RHEA:14086"/>
    </physiologicalReaction>
</comment>
<comment type="catalytic activity">
    <reaction evidence="1">
        <text>5-methylaminomethyl-S-(2E)-geranyl-thiouridine(34) in tRNA + selenophosphate + H(+) = 5-methylaminomethyl-2-(Se-phospho)selenouridine(34) in tRNA + (2E)-thiogeraniol</text>
        <dbReference type="Rhea" id="RHEA:60172"/>
        <dbReference type="Rhea" id="RHEA-COMP:14654"/>
        <dbReference type="Rhea" id="RHEA-COMP:15523"/>
        <dbReference type="ChEBI" id="CHEBI:15378"/>
        <dbReference type="ChEBI" id="CHEBI:16144"/>
        <dbReference type="ChEBI" id="CHEBI:140632"/>
        <dbReference type="ChEBI" id="CHEBI:143702"/>
        <dbReference type="ChEBI" id="CHEBI:143703"/>
    </reaction>
    <physiologicalReaction direction="left-to-right" evidence="1">
        <dbReference type="Rhea" id="RHEA:60173"/>
    </physiologicalReaction>
</comment>
<comment type="catalytic activity">
    <reaction evidence="1">
        <text>5-methylaminomethyl-2-(Se-phospho)selenouridine(34) in tRNA + H2O = 5-methylaminomethyl-2-selenouridine(34) in tRNA + phosphate</text>
        <dbReference type="Rhea" id="RHEA:60176"/>
        <dbReference type="Rhea" id="RHEA-COMP:10196"/>
        <dbReference type="Rhea" id="RHEA-COMP:15523"/>
        <dbReference type="ChEBI" id="CHEBI:15377"/>
        <dbReference type="ChEBI" id="CHEBI:43474"/>
        <dbReference type="ChEBI" id="CHEBI:82743"/>
        <dbReference type="ChEBI" id="CHEBI:143702"/>
    </reaction>
    <physiologicalReaction direction="left-to-right" evidence="1">
        <dbReference type="Rhea" id="RHEA:60177"/>
    </physiologicalReaction>
</comment>
<comment type="subunit">
    <text evidence="1">Monomer.</text>
</comment>
<comment type="similarity">
    <text evidence="1">Belongs to the SelU family.</text>
</comment>
<reference key="1">
    <citation type="journal article" date="2008" name="J. Bacteriol.">
        <title>The complete genome sequence of Escherichia coli DH10B: insights into the biology of a laboratory workhorse.</title>
        <authorList>
            <person name="Durfee T."/>
            <person name="Nelson R."/>
            <person name="Baldwin S."/>
            <person name="Plunkett G. III"/>
            <person name="Burland V."/>
            <person name="Mau B."/>
            <person name="Petrosino J.F."/>
            <person name="Qin X."/>
            <person name="Muzny D.M."/>
            <person name="Ayele M."/>
            <person name="Gibbs R.A."/>
            <person name="Csorgo B."/>
            <person name="Posfai G."/>
            <person name="Weinstock G.M."/>
            <person name="Blattner F.R."/>
        </authorList>
    </citation>
    <scope>NUCLEOTIDE SEQUENCE [LARGE SCALE GENOMIC DNA]</scope>
    <source>
        <strain>K12 / DH10B</strain>
    </source>
</reference>
<accession>B1XFT8</accession>
<feature type="chain" id="PRO_1000186071" description="tRNA 2-selenouridine synthase">
    <location>
        <begin position="1"/>
        <end position="364"/>
    </location>
</feature>
<feature type="domain" description="Rhodanese" evidence="1">
    <location>
        <begin position="14"/>
        <end position="137"/>
    </location>
</feature>
<feature type="active site" description="S-selanylcysteine intermediate" evidence="1">
    <location>
        <position position="97"/>
    </location>
</feature>
<name>SELU_ECODH</name>
<proteinExistence type="inferred from homology"/>
<dbReference type="EC" id="2.9.1.3" evidence="1"/>
<dbReference type="EMBL" id="CP000948">
    <property type="protein sequence ID" value="ACB01628.1"/>
    <property type="molecule type" value="Genomic_DNA"/>
</dbReference>
<dbReference type="SMR" id="B1XFT8"/>
<dbReference type="KEGG" id="ecd:ECDH10B_0459"/>
<dbReference type="HOGENOM" id="CLU_043456_1_0_6"/>
<dbReference type="GO" id="GO:0016765">
    <property type="term" value="F:transferase activity, transferring alkyl or aryl (other than methyl) groups"/>
    <property type="evidence" value="ECO:0007669"/>
    <property type="project" value="UniProtKB-UniRule"/>
</dbReference>
<dbReference type="GO" id="GO:0043828">
    <property type="term" value="F:tRNA 2-selenouridine synthase activity"/>
    <property type="evidence" value="ECO:0007669"/>
    <property type="project" value="UniProtKB-EC"/>
</dbReference>
<dbReference type="GO" id="GO:0002098">
    <property type="term" value="P:tRNA wobble uridine modification"/>
    <property type="evidence" value="ECO:0007669"/>
    <property type="project" value="UniProtKB-UniRule"/>
</dbReference>
<dbReference type="CDD" id="cd01520">
    <property type="entry name" value="RHOD_YbbB"/>
    <property type="match status" value="1"/>
</dbReference>
<dbReference type="FunFam" id="3.40.250.10:FF:000009">
    <property type="entry name" value="tRNA 2-selenouridine/geranyl-2-thiouridine synthase"/>
    <property type="match status" value="1"/>
</dbReference>
<dbReference type="Gene3D" id="3.40.250.10">
    <property type="entry name" value="Rhodanese-like domain"/>
    <property type="match status" value="1"/>
</dbReference>
<dbReference type="HAMAP" id="MF_01622">
    <property type="entry name" value="tRNA_sel_U_synth"/>
    <property type="match status" value="1"/>
</dbReference>
<dbReference type="InterPro" id="IPR001763">
    <property type="entry name" value="Rhodanese-like_dom"/>
</dbReference>
<dbReference type="InterPro" id="IPR036873">
    <property type="entry name" value="Rhodanese-like_dom_sf"/>
</dbReference>
<dbReference type="InterPro" id="IPR017582">
    <property type="entry name" value="SelU"/>
</dbReference>
<dbReference type="NCBIfam" id="NF008749">
    <property type="entry name" value="PRK11784.1-1"/>
    <property type="match status" value="1"/>
</dbReference>
<dbReference type="NCBIfam" id="NF008751">
    <property type="entry name" value="PRK11784.1-3"/>
    <property type="match status" value="1"/>
</dbReference>
<dbReference type="NCBIfam" id="TIGR03167">
    <property type="entry name" value="tRNA_sel_U_synt"/>
    <property type="match status" value="1"/>
</dbReference>
<dbReference type="PANTHER" id="PTHR30401">
    <property type="entry name" value="TRNA 2-SELENOURIDINE SYNTHASE"/>
    <property type="match status" value="1"/>
</dbReference>
<dbReference type="PANTHER" id="PTHR30401:SF0">
    <property type="entry name" value="TRNA 2-SELENOURIDINE SYNTHASE"/>
    <property type="match status" value="1"/>
</dbReference>
<dbReference type="SMART" id="SM00450">
    <property type="entry name" value="RHOD"/>
    <property type="match status" value="1"/>
</dbReference>
<dbReference type="SUPFAM" id="SSF52821">
    <property type="entry name" value="Rhodanese/Cell cycle control phosphatase"/>
    <property type="match status" value="1"/>
</dbReference>
<dbReference type="PROSITE" id="PS50206">
    <property type="entry name" value="RHODANESE_3"/>
    <property type="match status" value="1"/>
</dbReference>
<sequence>MQERHTEQDYRALLIADTPIIDVRAPIEFEHGAMPAAINLPLMNNDERAAVGTCYKQQGSDAALALGHKLVAGEIRQQRMDAWRAACLQNPQGILCCARGGQRSHIVQSWLHAAGIDYPLVEGGYKALRQTAIQATIELAQKPIVLIGGCTGSGKTLLVQQQPNGVDLEGLARHRGSAFGRTLQPQLSQASFENLLAAEMLKTDARQNLRLWVLEDESRMIGSNHLPECLRERMTQAAIAVVEDPFEIRLERLNEEYFLRMHHDFTHAYGDEQGWQEYCEYLHHGLSAIKRRLGLQRYNELAARLDAALTTQLTTGSTDGHLAWLVPLLEEYYDPMYRYQLEKKAEKVVFRGEWAEVAEWVKAR</sequence>